<proteinExistence type="inferred from homology"/>
<gene>
    <name type="primary">lptG</name>
    <name type="ordered locus">HI_1703</name>
</gene>
<protein>
    <recommendedName>
        <fullName>Lipopolysaccharide export system permease protein LptG</fullName>
    </recommendedName>
</protein>
<keyword id="KW-0997">Cell inner membrane</keyword>
<keyword id="KW-1003">Cell membrane</keyword>
<keyword id="KW-0472">Membrane</keyword>
<keyword id="KW-1185">Reference proteome</keyword>
<keyword id="KW-0812">Transmembrane</keyword>
<keyword id="KW-1133">Transmembrane helix</keyword>
<keyword id="KW-0813">Transport</keyword>
<dbReference type="EMBL" id="L42023">
    <property type="protein sequence ID" value="AAC23349.1"/>
    <property type="molecule type" value="Genomic_DNA"/>
</dbReference>
<dbReference type="PIR" id="I64175">
    <property type="entry name" value="I64175"/>
</dbReference>
<dbReference type="RefSeq" id="NP_439845.1">
    <property type="nucleotide sequence ID" value="NC_000907.1"/>
</dbReference>
<dbReference type="SMR" id="P45332"/>
<dbReference type="STRING" id="71421.HI_1703"/>
<dbReference type="DNASU" id="950522"/>
<dbReference type="EnsemblBacteria" id="AAC23349">
    <property type="protein sequence ID" value="AAC23349"/>
    <property type="gene ID" value="HI_1703"/>
</dbReference>
<dbReference type="KEGG" id="hin:HI_1703"/>
<dbReference type="PATRIC" id="fig|71421.8.peg.1782"/>
<dbReference type="eggNOG" id="COG0795">
    <property type="taxonomic scope" value="Bacteria"/>
</dbReference>
<dbReference type="HOGENOM" id="CLU_028799_1_1_6"/>
<dbReference type="OrthoDB" id="9776227at2"/>
<dbReference type="PhylomeDB" id="P45332"/>
<dbReference type="BioCyc" id="HINF71421:G1GJ1-1719-MONOMER"/>
<dbReference type="Proteomes" id="UP000000579">
    <property type="component" value="Chromosome"/>
</dbReference>
<dbReference type="GO" id="GO:0043190">
    <property type="term" value="C:ATP-binding cassette (ABC) transporter complex"/>
    <property type="evidence" value="ECO:0000318"/>
    <property type="project" value="GO_Central"/>
</dbReference>
<dbReference type="GO" id="GO:0015920">
    <property type="term" value="P:lipopolysaccharide transport"/>
    <property type="evidence" value="ECO:0000318"/>
    <property type="project" value="GO_Central"/>
</dbReference>
<dbReference type="GO" id="GO:0055085">
    <property type="term" value="P:transmembrane transport"/>
    <property type="evidence" value="ECO:0007669"/>
    <property type="project" value="InterPro"/>
</dbReference>
<dbReference type="InterPro" id="IPR030923">
    <property type="entry name" value="LptG"/>
</dbReference>
<dbReference type="InterPro" id="IPR005495">
    <property type="entry name" value="LptG/LptF_permease"/>
</dbReference>
<dbReference type="NCBIfam" id="TIGR04408">
    <property type="entry name" value="LptG_lptG"/>
    <property type="match status" value="1"/>
</dbReference>
<dbReference type="PANTHER" id="PTHR33529:SF2">
    <property type="entry name" value="LIPOPOLYSACCHARIDE EXPORT SYSTEM PERMEASE PROTEIN LPTG"/>
    <property type="match status" value="1"/>
</dbReference>
<dbReference type="PANTHER" id="PTHR33529">
    <property type="entry name" value="SLR0882 PROTEIN-RELATED"/>
    <property type="match status" value="1"/>
</dbReference>
<dbReference type="Pfam" id="PF03739">
    <property type="entry name" value="LptF_LptG"/>
    <property type="match status" value="1"/>
</dbReference>
<reference key="1">
    <citation type="journal article" date="1995" name="Science">
        <title>Whole-genome random sequencing and assembly of Haemophilus influenzae Rd.</title>
        <authorList>
            <person name="Fleischmann R.D."/>
            <person name="Adams M.D."/>
            <person name="White O."/>
            <person name="Clayton R.A."/>
            <person name="Kirkness E.F."/>
            <person name="Kerlavage A.R."/>
            <person name="Bult C.J."/>
            <person name="Tomb J.-F."/>
            <person name="Dougherty B.A."/>
            <person name="Merrick J.M."/>
            <person name="McKenney K."/>
            <person name="Sutton G.G."/>
            <person name="FitzHugh W."/>
            <person name="Fields C.A."/>
            <person name="Gocayne J.D."/>
            <person name="Scott J.D."/>
            <person name="Shirley R."/>
            <person name="Liu L.-I."/>
            <person name="Glodek A."/>
            <person name="Kelley J.M."/>
            <person name="Weidman J.F."/>
            <person name="Phillips C.A."/>
            <person name="Spriggs T."/>
            <person name="Hedblom E."/>
            <person name="Cotton M.D."/>
            <person name="Utterback T.R."/>
            <person name="Hanna M.C."/>
            <person name="Nguyen D.T."/>
            <person name="Saudek D.M."/>
            <person name="Brandon R.C."/>
            <person name="Fine L.D."/>
            <person name="Fritchman J.L."/>
            <person name="Fuhrmann J.L."/>
            <person name="Geoghagen N.S.M."/>
            <person name="Gnehm C.L."/>
            <person name="McDonald L.A."/>
            <person name="Small K.V."/>
            <person name="Fraser C.M."/>
            <person name="Smith H.O."/>
            <person name="Venter J.C."/>
        </authorList>
    </citation>
    <scope>NUCLEOTIDE SEQUENCE [LARGE SCALE GENOMIC DNA]</scope>
    <source>
        <strain>ATCC 51907 / DSM 11121 / KW20 / Rd</strain>
    </source>
</reference>
<accession>P45332</accession>
<comment type="function">
    <text evidence="1">Part of the ABC transporter complex LptBFG involved in the translocation of lipopolysaccharide (LPS) from the inner membrane to the outer membrane.</text>
</comment>
<comment type="subunit">
    <text evidence="1">Component of the lipopolysaccharide transport and assembly complex. The LptBFG transporter is composed of two ATP-binding proteins (LptB) and two transmembrane proteins (LptF and LptG) (By similarity).</text>
</comment>
<comment type="subcellular location">
    <subcellularLocation>
        <location evidence="1">Cell inner membrane</location>
        <topology evidence="1">Multi-pass membrane protein</topology>
    </subcellularLocation>
</comment>
<comment type="similarity">
    <text evidence="3">Belongs to the LptF/LptG family.</text>
</comment>
<feature type="chain" id="PRO_0000169778" description="Lipopolysaccharide export system permease protein LptG">
    <location>
        <begin position="1"/>
        <end position="358"/>
    </location>
</feature>
<feature type="transmembrane region" description="Helical" evidence="2">
    <location>
        <begin position="13"/>
        <end position="33"/>
    </location>
</feature>
<feature type="transmembrane region" description="Helical" evidence="2">
    <location>
        <begin position="62"/>
        <end position="82"/>
    </location>
</feature>
<feature type="transmembrane region" description="Helical" evidence="2">
    <location>
        <begin position="100"/>
        <end position="120"/>
    </location>
</feature>
<feature type="transmembrane region" description="Helical" evidence="2">
    <location>
        <begin position="276"/>
        <end position="296"/>
    </location>
</feature>
<feature type="transmembrane region" description="Helical" evidence="2">
    <location>
        <begin position="306"/>
        <end position="326"/>
    </location>
</feature>
<feature type="transmembrane region" description="Helical" evidence="2">
    <location>
        <begin position="332"/>
        <end position="352"/>
    </location>
</feature>
<name>LPTG_HAEIN</name>
<evidence type="ECO:0000250" key="1"/>
<evidence type="ECO:0000255" key="2"/>
<evidence type="ECO:0000305" key="3"/>
<sequence length="358" mass="39963">MINTLDRYIGKSILGAIFATLMTLVGLSAIIKFVEQFRSVGKGTYDIWQAVIFTGLTIPKDIETFFPMAALLGALIALGNLASRSELVIMQSAGFSRFKIGIAVMKTALPLVVFTMIIGEWGIPQTEQFARDTRAKALSGGSILSIKNGVWAKDGHHFVFVRRVTDDTKLDDIYIYTFDQQHNLIKLKHANQASYSEDEAKWTLRQVNHSTIMKDEIITTNHLSETWETSLTPDKLGAVSLRPTSLSISGLYHYISFLRETGQDVSRFELTFWRKIFQPVSVGVMMLLALSFIFGSLRSVTAGARIVTGICVGFLFYVVNEILGQTSVVYGIPAIFGALIPSLLFIVMIWWLLSRKRD</sequence>
<organism>
    <name type="scientific">Haemophilus influenzae (strain ATCC 51907 / DSM 11121 / KW20 / Rd)</name>
    <dbReference type="NCBI Taxonomy" id="71421"/>
    <lineage>
        <taxon>Bacteria</taxon>
        <taxon>Pseudomonadati</taxon>
        <taxon>Pseudomonadota</taxon>
        <taxon>Gammaproteobacteria</taxon>
        <taxon>Pasteurellales</taxon>
        <taxon>Pasteurellaceae</taxon>
        <taxon>Haemophilus</taxon>
    </lineage>
</organism>